<accession>Q7WDT6</accession>
<gene>
    <name type="primary">ptlG</name>
    <name type="ordered locus">BB4901</name>
</gene>
<reference key="1">
    <citation type="journal article" date="2003" name="Nat. Genet.">
        <title>Comparative analysis of the genome sequences of Bordetella pertussis, Bordetella parapertussis and Bordetella bronchiseptica.</title>
        <authorList>
            <person name="Parkhill J."/>
            <person name="Sebaihia M."/>
            <person name="Preston A."/>
            <person name="Murphy L.D."/>
            <person name="Thomson N.R."/>
            <person name="Harris D.E."/>
            <person name="Holden M.T.G."/>
            <person name="Churcher C.M."/>
            <person name="Bentley S.D."/>
            <person name="Mungall K.L."/>
            <person name="Cerdeno-Tarraga A.-M."/>
            <person name="Temple L."/>
            <person name="James K.D."/>
            <person name="Harris B."/>
            <person name="Quail M.A."/>
            <person name="Achtman M."/>
            <person name="Atkin R."/>
            <person name="Baker S."/>
            <person name="Basham D."/>
            <person name="Bason N."/>
            <person name="Cherevach I."/>
            <person name="Chillingworth T."/>
            <person name="Collins M."/>
            <person name="Cronin A."/>
            <person name="Davis P."/>
            <person name="Doggett J."/>
            <person name="Feltwell T."/>
            <person name="Goble A."/>
            <person name="Hamlin N."/>
            <person name="Hauser H."/>
            <person name="Holroyd S."/>
            <person name="Jagels K."/>
            <person name="Leather S."/>
            <person name="Moule S."/>
            <person name="Norberczak H."/>
            <person name="O'Neil S."/>
            <person name="Ormond D."/>
            <person name="Price C."/>
            <person name="Rabbinowitsch E."/>
            <person name="Rutter S."/>
            <person name="Sanders M."/>
            <person name="Saunders D."/>
            <person name="Seeger K."/>
            <person name="Sharp S."/>
            <person name="Simmonds M."/>
            <person name="Skelton J."/>
            <person name="Squares R."/>
            <person name="Squares S."/>
            <person name="Stevens K."/>
            <person name="Unwin L."/>
            <person name="Whitehead S."/>
            <person name="Barrell B.G."/>
            <person name="Maskell D.J."/>
        </authorList>
    </citation>
    <scope>NUCLEOTIDE SEQUENCE [LARGE SCALE GENOMIC DNA]</scope>
    <source>
        <strain>ATCC BAA-588 / NCTC 13252 / RB50</strain>
    </source>
</reference>
<reference key="2">
    <citation type="journal article" date="1987" name="J. Bacteriol.">
        <title>Bordetella parapertussis and Bordetella bronchiseptica contain transcriptionally silent pertussis toxin genes.</title>
        <authorList>
            <person name="Arico B."/>
            <person name="Rappuoli R."/>
        </authorList>
    </citation>
    <scope>TRANSCRIPTIONAL SILENCING</scope>
    <source>
        <strain>ATCC 4617 / NCIB 9935 / NCTC 8344 / NRRL B-140</strain>
    </source>
</reference>
<reference key="3">
    <citation type="journal article" date="1996" name="Infect. Immun.">
        <title>Analysis of proteins encoded by the ptx and ptl genes of Bordetella bronchiseptica and Bordetella parapertussis.</title>
        <authorList>
            <person name="Hausman S.Z."/>
            <person name="Cherry J.D."/>
            <person name="Heininger U."/>
            <person name="Wirsing von Koenig C.H."/>
            <person name="Burns D.L."/>
        </authorList>
    </citation>
    <scope>POSSIBLE EXPRESSION OF PTL AND PTX PROTEINS UNDER CONDITIONS DIFFERENT FROM B.PERTUSSIS EXPRESSION CONDITIONS</scope>
    <source>
        <strain>ATCC 31437 / Bb55</strain>
    </source>
</reference>
<name>PTLG_BORBR</name>
<feature type="chain" id="PRO_0000287415" description="Type IV secretion system protein PtlG homolog">
    <location>
        <begin position="1"/>
        <end position="374"/>
    </location>
</feature>
<feature type="transmembrane region" description="Helical" evidence="1">
    <location>
        <begin position="38"/>
        <end position="56"/>
    </location>
</feature>
<feature type="region of interest" description="Disordered" evidence="2">
    <location>
        <begin position="86"/>
        <end position="117"/>
    </location>
</feature>
<feature type="compositionally biased region" description="Pro residues" evidence="2">
    <location>
        <begin position="92"/>
        <end position="117"/>
    </location>
</feature>
<sequence length="374" mass="39529">MLNRPSSPDGGEAHAWPPDPEIPVFANAEHAHRRPLRWMFALVAVALSCLLATGIWRSRAAPPHAATQTVAPAGQALPPGRIFTVHPREPEPAPLPDMPAAPDPILPQPRPAPPVPPPPIRAPYDYDEPAPRRDSAALKSGPAMMVATAARLGQTERAGMADDGVSADAATLIGRNVSRATRSGDRDYRLLPGTFIDCILQTRIVTNVPGLTTCIVSRDVYSASGKRVLVPRGTTVVGEYRADLAQGSQRIYVAWSRLFMPSGLTIELASPAVDGTGAAGLPGVVDDKFAQRFGGALLLSVLGDATSYMLARATDARHGVNVNLTAAGTMNSLAASALNNTINIPPTLYKNHGDQIGILVARPLDFSILRGTNE</sequence>
<keyword id="KW-1003">Cell membrane</keyword>
<keyword id="KW-0472">Membrane</keyword>
<keyword id="KW-0812">Transmembrane</keyword>
<keyword id="KW-1133">Transmembrane helix</keyword>
<organism>
    <name type="scientific">Bordetella bronchiseptica (strain ATCC BAA-588 / NCTC 13252 / RB50)</name>
    <name type="common">Alcaligenes bronchisepticus</name>
    <dbReference type="NCBI Taxonomy" id="257310"/>
    <lineage>
        <taxon>Bacteria</taxon>
        <taxon>Pseudomonadati</taxon>
        <taxon>Pseudomonadota</taxon>
        <taxon>Betaproteobacteria</taxon>
        <taxon>Burkholderiales</taxon>
        <taxon>Alcaligenaceae</taxon>
        <taxon>Bordetella</taxon>
    </lineage>
</organism>
<protein>
    <recommendedName>
        <fullName>Type IV secretion system protein PtlG homolog</fullName>
    </recommendedName>
</protein>
<comment type="subcellular location">
    <subcellularLocation>
        <location evidence="3">Cell membrane</location>
        <topology evidence="3">Single-pass membrane protein</topology>
    </subcellularLocation>
</comment>
<comment type="similarity">
    <text evidence="3">Belongs to the TrbI/VirB10 family.</text>
</comment>
<comment type="caution">
    <text evidence="3">B.parapertussis and B.bronchiseptica seem not to produce the pertussis toxin (S1, S2, S4, S5 and S3) and Ptl proteins (PtlA, PtlB, PtlC, PtlD, PtlE, PtlF, PtlG, PtlH and PtlI) in vivo due to changes in the promoter region of the ptx-ptl operon. However, it is possible that their promoter is active under certain, as-yet-undefined conditions and that B.parapertussis and B.bronchiseptica are therefore capable of producing these proteins.</text>
</comment>
<evidence type="ECO:0000255" key="1"/>
<evidence type="ECO:0000256" key="2">
    <source>
        <dbReference type="SAM" id="MobiDB-lite"/>
    </source>
</evidence>
<evidence type="ECO:0000305" key="3"/>
<proteinExistence type="inferred from homology"/>
<dbReference type="EMBL" id="BX640451">
    <property type="protein sequence ID" value="CAE35265.1"/>
    <property type="molecule type" value="Genomic_DNA"/>
</dbReference>
<dbReference type="RefSeq" id="WP_003815865.1">
    <property type="nucleotide sequence ID" value="NC_002927.3"/>
</dbReference>
<dbReference type="SMR" id="Q7WDT6"/>
<dbReference type="KEGG" id="bbr:BB4901"/>
<dbReference type="eggNOG" id="COG2948">
    <property type="taxonomic scope" value="Bacteria"/>
</dbReference>
<dbReference type="HOGENOM" id="CLU_041899_7_0_4"/>
<dbReference type="Proteomes" id="UP000001027">
    <property type="component" value="Chromosome"/>
</dbReference>
<dbReference type="GO" id="GO:0005886">
    <property type="term" value="C:plasma membrane"/>
    <property type="evidence" value="ECO:0007669"/>
    <property type="project" value="UniProtKB-SubCell"/>
</dbReference>
<dbReference type="CDD" id="cd16429">
    <property type="entry name" value="VirB10"/>
    <property type="match status" value="1"/>
</dbReference>
<dbReference type="Gene3D" id="2.40.128.260">
    <property type="entry name" value="Type IV secretion system, VirB10/TraB/TrbI"/>
    <property type="match status" value="1"/>
</dbReference>
<dbReference type="InterPro" id="IPR047695">
    <property type="entry name" value="T4SS_VirB10/PtlG"/>
</dbReference>
<dbReference type="InterPro" id="IPR005498">
    <property type="entry name" value="T4SS_VirB10/TraB/TrbI"/>
</dbReference>
<dbReference type="InterPro" id="IPR042217">
    <property type="entry name" value="T4SS_VirB10/TrbI"/>
</dbReference>
<dbReference type="NCBIfam" id="NF038091">
    <property type="entry name" value="T4SS_VirB10"/>
    <property type="match status" value="1"/>
</dbReference>
<dbReference type="Pfam" id="PF03743">
    <property type="entry name" value="TrbI"/>
    <property type="match status" value="1"/>
</dbReference>